<accession>O14072</accession>
<accession>Q9USD0</accession>
<accession>Q9UT01</accession>
<comment type="function">
    <text evidence="1 5 6 7">Endoplasmic reticulum translocase required to remove mitochondrial transmembrane proteins mistargeted to the endoplasmic reticulum. Acts as a dislocase that mediates the ATP-dependent extraction of mislocalized mitochondrial transmembrane proteins from the endoplasmic reticulum membrane. Specifically binds mitochondrial tail-anchored transmembrane proteins: has an atypically large substrate-binding pocket that recognizes and binds moderately hydrophobic transmembranes with short hydrophilic lumenal domains (By similarity). Involved in controlling nuclear calcium ion levels. Required for cytokinesis and stabilizing microtubules (PubMed:12058018). Required for assembly of the forespore membrane (PubMed:16394583). Involved in calcium transport to the endoplasmic reticulum (PubMed:22132152).</text>
</comment>
<comment type="catalytic activity">
    <reaction evidence="1">
        <text>[protein]-with a C-terminal TM segment(out) + ATP + H2O = [protein]-with a C-terminal TM segment(in) + ADP + phosphate + H(+)</text>
        <dbReference type="Rhea" id="RHEA:66168"/>
        <dbReference type="Rhea" id="RHEA-COMP:16963"/>
        <dbReference type="ChEBI" id="CHEBI:15377"/>
        <dbReference type="ChEBI" id="CHEBI:15378"/>
        <dbReference type="ChEBI" id="CHEBI:30616"/>
        <dbReference type="ChEBI" id="CHEBI:43474"/>
        <dbReference type="ChEBI" id="CHEBI:90782"/>
        <dbReference type="ChEBI" id="CHEBI:456216"/>
    </reaction>
</comment>
<comment type="cofactor">
    <cofactor evidence="1">
        <name>Mg(2+)</name>
        <dbReference type="ChEBI" id="CHEBI:18420"/>
    </cofactor>
</comment>
<comment type="subcellular location">
    <subcellularLocation>
        <location evidence="4 5 6 7">Endoplasmic reticulum membrane</location>
        <topology evidence="4 5">Multi-pass membrane protein</topology>
    </subcellularLocation>
</comment>
<comment type="domain">
    <text evidence="1">Contains a large substrate-binding pocket that recognizes alpha-helical transmembranes, which alternately faces the endoplasmic reticulum lumen and cytosol, while remaining accessible to the lipid bilayer through a lateral opening. The translocase alternates between two conformations: inward-open (E1) and outward-open (E2) states. Undergoes a series of conformational changes with ATP-binding, phosphorylation of the Asp active site and subsequent dephosphorylation in a Post-Albers cycle (i.e., E1 -&gt; E1-ATP -&gt; E1P-ADP -&gt; E1P -&gt; E2P -&gt; E2-Pi -&gt; E1). A substrate transmembrane helix with a short, preferentially positively charged lumenal segment binds to the outward-open pocket and the E2P-to-E1 transition flips the transmembrane by a switch from the outward-open to inward-open conformation.</text>
</comment>
<comment type="disruption phenotype">
    <text evidence="6 7">Increased levels of intracellular calcium. Impaired ATP-dependent calcium transport in endoplasmic reticulum (ER) membranes, but up-regulated vacuolar calcium transport. Sensitive to ER stress inducers DTT and tunicamycin, which inhibit the protein disulfide bond formation and N-glycosylation, respectively, and is thus sensitive to accumulation of misfolded proteins in the ER. Stimulated calcineurin phosphatase activity (PubMed:22132152). Cells conjugate to form zygotes at a lower efficiency than wild-type and they do not sporulate (PubMed:16394583).</text>
</comment>
<comment type="similarity">
    <text evidence="11">Belongs to the cation transport ATPase (P-type) (TC 3.A.3) family. Type V subfamily.</text>
</comment>
<organism>
    <name type="scientific">Schizosaccharomyces pombe (strain 972 / ATCC 24843)</name>
    <name type="common">Fission yeast</name>
    <dbReference type="NCBI Taxonomy" id="284812"/>
    <lineage>
        <taxon>Eukaryota</taxon>
        <taxon>Fungi</taxon>
        <taxon>Dikarya</taxon>
        <taxon>Ascomycota</taxon>
        <taxon>Taphrinomycotina</taxon>
        <taxon>Schizosaccharomycetes</taxon>
        <taxon>Schizosaccharomycetales</taxon>
        <taxon>Schizosaccharomycetaceae</taxon>
        <taxon>Schizosaccharomyces</taxon>
    </lineage>
</organism>
<dbReference type="EC" id="7.4.2.-" evidence="1"/>
<dbReference type="EMBL" id="CU329670">
    <property type="protein sequence ID" value="CAA20137.1"/>
    <property type="molecule type" value="Genomic_DNA"/>
</dbReference>
<dbReference type="EMBL" id="AB027853">
    <property type="protein sequence ID" value="BAA87157.1"/>
    <property type="molecule type" value="Genomic_DNA"/>
</dbReference>
<dbReference type="PIR" id="T41702">
    <property type="entry name" value="T41702"/>
</dbReference>
<dbReference type="RefSeq" id="NP_593971.1">
    <property type="nucleotide sequence ID" value="NM_001019398.2"/>
</dbReference>
<dbReference type="SMR" id="O14072"/>
<dbReference type="BioGRID" id="278845">
    <property type="interactions" value="3"/>
</dbReference>
<dbReference type="FunCoup" id="O14072">
    <property type="interactions" value="648"/>
</dbReference>
<dbReference type="STRING" id="284812.O14072"/>
<dbReference type="iPTMnet" id="O14072"/>
<dbReference type="PaxDb" id="4896-SPACUNK4.07c.1"/>
<dbReference type="EnsemblFungi" id="SPACUNK4.07c.1">
    <property type="protein sequence ID" value="SPACUNK4.07c.1:pep"/>
    <property type="gene ID" value="SPACUNK4.07c"/>
</dbReference>
<dbReference type="GeneID" id="2542381"/>
<dbReference type="KEGG" id="spo:2542381"/>
<dbReference type="PomBase" id="SPACUNK4.07c">
    <property type="gene designation" value="cta4"/>
</dbReference>
<dbReference type="VEuPathDB" id="FungiDB:SPACUNK4.07c"/>
<dbReference type="eggNOG" id="KOG0209">
    <property type="taxonomic scope" value="Eukaryota"/>
</dbReference>
<dbReference type="HOGENOM" id="CLU_001828_4_1_1"/>
<dbReference type="InParanoid" id="O14072"/>
<dbReference type="OMA" id="QKTKYVW"/>
<dbReference type="PhylomeDB" id="O14072"/>
<dbReference type="Reactome" id="R-SPO-936837">
    <property type="pathway name" value="Ion transport by P-type ATPases"/>
</dbReference>
<dbReference type="PRO" id="PR:O14072"/>
<dbReference type="Proteomes" id="UP000002485">
    <property type="component" value="Chromosome I"/>
</dbReference>
<dbReference type="GO" id="GO:0005783">
    <property type="term" value="C:endoplasmic reticulum"/>
    <property type="evidence" value="ECO:0000314"/>
    <property type="project" value="PomBase"/>
</dbReference>
<dbReference type="GO" id="GO:0005789">
    <property type="term" value="C:endoplasmic reticulum membrane"/>
    <property type="evidence" value="ECO:0000314"/>
    <property type="project" value="PomBase"/>
</dbReference>
<dbReference type="GO" id="GO:0005524">
    <property type="term" value="F:ATP binding"/>
    <property type="evidence" value="ECO:0007669"/>
    <property type="project" value="UniProtKB-KW"/>
</dbReference>
<dbReference type="GO" id="GO:0016887">
    <property type="term" value="F:ATP hydrolysis activity"/>
    <property type="evidence" value="ECO:0007669"/>
    <property type="project" value="InterPro"/>
</dbReference>
<dbReference type="GO" id="GO:0019829">
    <property type="term" value="F:ATPase-coupled monoatomic cation transmembrane transporter activity"/>
    <property type="evidence" value="ECO:0000318"/>
    <property type="project" value="GO_Central"/>
</dbReference>
<dbReference type="GO" id="GO:0140567">
    <property type="term" value="F:membrane protein dislocase activity"/>
    <property type="evidence" value="ECO:0000266"/>
    <property type="project" value="PomBase"/>
</dbReference>
<dbReference type="GO" id="GO:0046872">
    <property type="term" value="F:metal ion binding"/>
    <property type="evidence" value="ECO:0007669"/>
    <property type="project" value="UniProtKB-KW"/>
</dbReference>
<dbReference type="GO" id="GO:0015662">
    <property type="term" value="F:P-type ion transporter activity"/>
    <property type="evidence" value="ECO:0000318"/>
    <property type="project" value="GO_Central"/>
</dbReference>
<dbReference type="GO" id="GO:0051301">
    <property type="term" value="P:cell division"/>
    <property type="evidence" value="ECO:0007669"/>
    <property type="project" value="UniProtKB-KW"/>
</dbReference>
<dbReference type="GO" id="GO:0140569">
    <property type="term" value="P:extraction of mislocalized protein from ER membrane"/>
    <property type="evidence" value="ECO:0000250"/>
    <property type="project" value="PomBase"/>
</dbReference>
<dbReference type="GO" id="GO:0006874">
    <property type="term" value="P:intracellular calcium ion homeostasis"/>
    <property type="evidence" value="ECO:0000315"/>
    <property type="project" value="PomBase"/>
</dbReference>
<dbReference type="GO" id="GO:0015031">
    <property type="term" value="P:protein transport"/>
    <property type="evidence" value="ECO:0007669"/>
    <property type="project" value="UniProtKB-KW"/>
</dbReference>
<dbReference type="GO" id="GO:0030435">
    <property type="term" value="P:sporulation resulting in formation of a cellular spore"/>
    <property type="evidence" value="ECO:0007669"/>
    <property type="project" value="UniProtKB-KW"/>
</dbReference>
<dbReference type="GO" id="GO:0055085">
    <property type="term" value="P:transmembrane transport"/>
    <property type="evidence" value="ECO:0000318"/>
    <property type="project" value="GO_Central"/>
</dbReference>
<dbReference type="CDD" id="cd07543">
    <property type="entry name" value="P-type_ATPase_cation"/>
    <property type="match status" value="1"/>
</dbReference>
<dbReference type="FunFam" id="3.40.1110.10:FF:000058">
    <property type="entry name" value="Cation-transporting ATPase"/>
    <property type="match status" value="1"/>
</dbReference>
<dbReference type="FunFam" id="3.40.50.1000:FF:000056">
    <property type="entry name" value="Cation-transporting ATPase"/>
    <property type="match status" value="1"/>
</dbReference>
<dbReference type="Gene3D" id="3.40.1110.10">
    <property type="entry name" value="Calcium-transporting ATPase, cytoplasmic domain N"/>
    <property type="match status" value="1"/>
</dbReference>
<dbReference type="Gene3D" id="2.70.150.10">
    <property type="entry name" value="Calcium-transporting ATPase, cytoplasmic transduction domain A"/>
    <property type="match status" value="1"/>
</dbReference>
<dbReference type="Gene3D" id="3.40.50.1000">
    <property type="entry name" value="HAD superfamily/HAD-like"/>
    <property type="match status" value="1"/>
</dbReference>
<dbReference type="InterPro" id="IPR057255">
    <property type="entry name" value="2TM_P5A-ATPase"/>
</dbReference>
<dbReference type="InterPro" id="IPR023299">
    <property type="entry name" value="ATPase_P-typ_cyto_dom_N"/>
</dbReference>
<dbReference type="InterPro" id="IPR018303">
    <property type="entry name" value="ATPase_P-typ_P_site"/>
</dbReference>
<dbReference type="InterPro" id="IPR023298">
    <property type="entry name" value="ATPase_P-typ_TM_dom_sf"/>
</dbReference>
<dbReference type="InterPro" id="IPR008250">
    <property type="entry name" value="ATPase_P-typ_transduc_dom_A_sf"/>
</dbReference>
<dbReference type="InterPro" id="IPR036412">
    <property type="entry name" value="HAD-like_sf"/>
</dbReference>
<dbReference type="InterPro" id="IPR023214">
    <property type="entry name" value="HAD_sf"/>
</dbReference>
<dbReference type="InterPro" id="IPR006544">
    <property type="entry name" value="P-type_TPase_V"/>
</dbReference>
<dbReference type="InterPro" id="IPR047820">
    <property type="entry name" value="P5A-type_ATPase"/>
</dbReference>
<dbReference type="InterPro" id="IPR001757">
    <property type="entry name" value="P_typ_ATPase"/>
</dbReference>
<dbReference type="InterPro" id="IPR044492">
    <property type="entry name" value="P_typ_ATPase_HD_dom"/>
</dbReference>
<dbReference type="NCBIfam" id="TIGR01494">
    <property type="entry name" value="ATPase_P-type"/>
    <property type="match status" value="2"/>
</dbReference>
<dbReference type="NCBIfam" id="TIGR01657">
    <property type="entry name" value="P-ATPase-V"/>
    <property type="match status" value="1"/>
</dbReference>
<dbReference type="PANTHER" id="PTHR45630">
    <property type="entry name" value="CATION-TRANSPORTING ATPASE-RELATED"/>
    <property type="match status" value="1"/>
</dbReference>
<dbReference type="PANTHER" id="PTHR45630:SF7">
    <property type="entry name" value="ENDOPLASMIC RETICULUM TRANSMEMBRANE HELIX TRANSLOCASE"/>
    <property type="match status" value="1"/>
</dbReference>
<dbReference type="Pfam" id="PF23143">
    <property type="entry name" value="2TM_P5A-ATPase"/>
    <property type="match status" value="1"/>
</dbReference>
<dbReference type="Pfam" id="PF00122">
    <property type="entry name" value="E1-E2_ATPase"/>
    <property type="match status" value="1"/>
</dbReference>
<dbReference type="PRINTS" id="PR00119">
    <property type="entry name" value="CATATPASE"/>
</dbReference>
<dbReference type="SFLD" id="SFLDS00003">
    <property type="entry name" value="Haloacid_Dehalogenase"/>
    <property type="match status" value="1"/>
</dbReference>
<dbReference type="SFLD" id="SFLDF00027">
    <property type="entry name" value="p-type_atpase"/>
    <property type="match status" value="1"/>
</dbReference>
<dbReference type="SUPFAM" id="SSF81653">
    <property type="entry name" value="Calcium ATPase, transduction domain A"/>
    <property type="match status" value="1"/>
</dbReference>
<dbReference type="SUPFAM" id="SSF81665">
    <property type="entry name" value="Calcium ATPase, transmembrane domain M"/>
    <property type="match status" value="1"/>
</dbReference>
<dbReference type="SUPFAM" id="SSF56784">
    <property type="entry name" value="HAD-like"/>
    <property type="match status" value="1"/>
</dbReference>
<dbReference type="SUPFAM" id="SSF81660">
    <property type="entry name" value="Metal cation-transporting ATPase, ATP-binding domain N"/>
    <property type="match status" value="1"/>
</dbReference>
<dbReference type="PROSITE" id="PS00154">
    <property type="entry name" value="ATPASE_E1_E2"/>
    <property type="match status" value="1"/>
</dbReference>
<name>ATC4_SCHPO</name>
<proteinExistence type="evidence at protein level"/>
<gene>
    <name evidence="8 9 10" type="primary">cta4</name>
    <name evidence="9" type="synonym">sev4</name>
    <name type="ORF">SPAC2E11.07c</name>
    <name evidence="12" type="ORF">SPACUNK4.07c</name>
    <name evidence="12" type="ORF">SPAPYUK71.01</name>
</gene>
<protein>
    <recommendedName>
        <fullName evidence="11">Endoplasmic reticulum transmembrane helix translocase</fullName>
        <ecNumber evidence="1">7.4.2.-</ecNumber>
    </recommendedName>
    <alternativeName>
        <fullName evidence="8 9">P-type ATPase cta4</fullName>
    </alternativeName>
    <alternativeName>
        <fullName evidence="10">P5A-type ATPase cta4</fullName>
    </alternativeName>
    <alternativeName>
        <fullName evidence="9">Sporulation protein essential for vegetative growth 4</fullName>
    </alternativeName>
</protein>
<sequence>MGSKALITSPDISSGQLYIKLPTFFHLYVWPFALFVYPYIGYVYQNKLYSEEVRYLTYIAVGTIHALFWLAGEWNTKVYCLMTCRKTDKVEQATHILVTPSKIGESSSVEPITKLVLPDSQTIQYSFSFQRKRFIYEPEKGCFANITFPMDEPSTIGTLKKSTGLTNIQSEIFLYRYGKNCFDIPIPTFGTLFKEHAVAPFFVFQIFCCVLWCLDDYWYFSLFSMFMIIALECSVVWQRQRTLTEFRTMSIKPYEIQVYRNKHWFPISTEDLLPNDVVSVLHNKEDSGLPCDLLLLSGSCVVNEAMLSGESTPLVKESIELRPEEAVIDVDELDKNAVLFGGTRVLQVTQSPFCKLKTPDNGVPAIVLRTGFETSQGSLVRTMVFSSEKVTANNRESLYFILFLLVFAIAASGYVWHVGSKTERSRYKLMLDCVMIITSVVPSELPMELSMAVNASLGALSKYYIYCTEPFRIPLSGHLDICCFDKTGTLTEEHMVVQGIAGVNRKDPYSLEKLSDASNDAILAIATAHTLVLLEQEGETPKVVGDPMEKATVENLGWSIEKKNFVSAPEGSVFYKGKVQIIRNFQFSSALKRQSSVSNVRVSGGSFKTFVSVKGAPEVIATMLREVPKDYEKIYKDYGRKGSRVLALGYKYFKNYIPENQVSDLSRESIESDLVFAGFLIFTSPLKEDARQTVQMLNNSSHRCMMITGDNPLTAVYVAEQVGIVEKPTLVLDIKHENEKILEWKSTDDTINLPMNPHKSLEASLYEKYDLCITGRALSQIINPDVIMSIFTHAWVYARVSPSQKEFMISTLKHNGYITLMCGDGTNDVGALKQAHVGVALLNASEEDMLEMQERARNQKLMGVYEKQIQLAKRFNLPTPPVPPALCHAFPPGPNNPHREKTQEGLNKVLEDLETKKASDVQLTEAEKAAERRANLANKMFDTLANASDDEAPKLKLGDASVAAPFTSKLAVVSSITNIVRQGRCTLVALVQMHKILALNCLITAYSLSVLHLDGIKFGDTQYTISGMLMSVCFYCVSRARPLETLSKERPQAGIFNTYIIGSVLGQFAIHIVTLIYITRVVYLYEDPLEKVDLEETFKPSLLNTAIYLLQLIQQVSTFAINYQGRPFREALSENKGMYYGLLGIAFVAIAGVTEFSPELNAKLQLVKMAYNFQIQLLATMVVDYAACWIIEELMKKYFRDNKPKEIVLRN</sequence>
<reference key="1">
    <citation type="journal article" date="2002" name="Nature">
        <title>The genome sequence of Schizosaccharomyces pombe.</title>
        <authorList>
            <person name="Wood V."/>
            <person name="Gwilliam R."/>
            <person name="Rajandream M.A."/>
            <person name="Lyne M.H."/>
            <person name="Lyne R."/>
            <person name="Stewart A."/>
            <person name="Sgouros J.G."/>
            <person name="Peat N."/>
            <person name="Hayles J."/>
            <person name="Baker S.G."/>
            <person name="Basham D."/>
            <person name="Bowman S."/>
            <person name="Brooks K."/>
            <person name="Brown D."/>
            <person name="Brown S."/>
            <person name="Chillingworth T."/>
            <person name="Churcher C.M."/>
            <person name="Collins M."/>
            <person name="Connor R."/>
            <person name="Cronin A."/>
            <person name="Davis P."/>
            <person name="Feltwell T."/>
            <person name="Fraser A."/>
            <person name="Gentles S."/>
            <person name="Goble A."/>
            <person name="Hamlin N."/>
            <person name="Harris D.E."/>
            <person name="Hidalgo J."/>
            <person name="Hodgson G."/>
            <person name="Holroyd S."/>
            <person name="Hornsby T."/>
            <person name="Howarth S."/>
            <person name="Huckle E.J."/>
            <person name="Hunt S."/>
            <person name="Jagels K."/>
            <person name="James K.D."/>
            <person name="Jones L."/>
            <person name="Jones M."/>
            <person name="Leather S."/>
            <person name="McDonald S."/>
            <person name="McLean J."/>
            <person name="Mooney P."/>
            <person name="Moule S."/>
            <person name="Mungall K.L."/>
            <person name="Murphy L.D."/>
            <person name="Niblett D."/>
            <person name="Odell C."/>
            <person name="Oliver K."/>
            <person name="O'Neil S."/>
            <person name="Pearson D."/>
            <person name="Quail M.A."/>
            <person name="Rabbinowitsch E."/>
            <person name="Rutherford K.M."/>
            <person name="Rutter S."/>
            <person name="Saunders D."/>
            <person name="Seeger K."/>
            <person name="Sharp S."/>
            <person name="Skelton J."/>
            <person name="Simmonds M.N."/>
            <person name="Squares R."/>
            <person name="Squares S."/>
            <person name="Stevens K."/>
            <person name="Taylor K."/>
            <person name="Taylor R.G."/>
            <person name="Tivey A."/>
            <person name="Walsh S.V."/>
            <person name="Warren T."/>
            <person name="Whitehead S."/>
            <person name="Woodward J.R."/>
            <person name="Volckaert G."/>
            <person name="Aert R."/>
            <person name="Robben J."/>
            <person name="Grymonprez B."/>
            <person name="Weltjens I."/>
            <person name="Vanstreels E."/>
            <person name="Rieger M."/>
            <person name="Schaefer M."/>
            <person name="Mueller-Auer S."/>
            <person name="Gabel C."/>
            <person name="Fuchs M."/>
            <person name="Duesterhoeft A."/>
            <person name="Fritzc C."/>
            <person name="Holzer E."/>
            <person name="Moestl D."/>
            <person name="Hilbert H."/>
            <person name="Borzym K."/>
            <person name="Langer I."/>
            <person name="Beck A."/>
            <person name="Lehrach H."/>
            <person name="Reinhardt R."/>
            <person name="Pohl T.M."/>
            <person name="Eger P."/>
            <person name="Zimmermann W."/>
            <person name="Wedler H."/>
            <person name="Wambutt R."/>
            <person name="Purnelle B."/>
            <person name="Goffeau A."/>
            <person name="Cadieu E."/>
            <person name="Dreano S."/>
            <person name="Gloux S."/>
            <person name="Lelaure V."/>
            <person name="Mottier S."/>
            <person name="Galibert F."/>
            <person name="Aves S.J."/>
            <person name="Xiang Z."/>
            <person name="Hunt C."/>
            <person name="Moore K."/>
            <person name="Hurst S.M."/>
            <person name="Lucas M."/>
            <person name="Rochet M."/>
            <person name="Gaillardin C."/>
            <person name="Tallada V.A."/>
            <person name="Garzon A."/>
            <person name="Thode G."/>
            <person name="Daga R.R."/>
            <person name="Cruzado L."/>
            <person name="Jimenez J."/>
            <person name="Sanchez M."/>
            <person name="del Rey F."/>
            <person name="Benito J."/>
            <person name="Dominguez A."/>
            <person name="Revuelta J.L."/>
            <person name="Moreno S."/>
            <person name="Armstrong J."/>
            <person name="Forsburg S.L."/>
            <person name="Cerutti L."/>
            <person name="Lowe T."/>
            <person name="McCombie W.R."/>
            <person name="Paulsen I."/>
            <person name="Potashkin J."/>
            <person name="Shpakovski G.V."/>
            <person name="Ussery D."/>
            <person name="Barrell B.G."/>
            <person name="Nurse P."/>
        </authorList>
    </citation>
    <scope>NUCLEOTIDE SEQUENCE [LARGE SCALE GENOMIC DNA]</scope>
    <source>
        <strain>972 / ATCC 24843</strain>
    </source>
</reference>
<reference key="2">
    <citation type="journal article" date="2000" name="Genes Cells">
        <title>Large-scale screening of intracellular protein localization in living fission yeast cells by the use of a GFP-fusion genomic DNA library.</title>
        <authorList>
            <person name="Ding D.-Q."/>
            <person name="Tomita Y."/>
            <person name="Yamamoto A."/>
            <person name="Chikashige Y."/>
            <person name="Haraguchi T."/>
            <person name="Hiraoka Y."/>
        </authorList>
    </citation>
    <scope>NUCLEOTIDE SEQUENCE [LARGE SCALE GENOMIC DNA] OF 617-809</scope>
    <scope>SUBCELLULAR LOCATION</scope>
    <source>
        <strain>ATCC 38364 / 968</strain>
    </source>
</reference>
<reference key="3">
    <citation type="journal article" date="2002" name="J. Cell Biol.">
        <title>The endoplasmic reticulum cation P-type ATPase Cta4p is required for control of cell shape and microtubule dynamics.</title>
        <authorList>
            <person name="Okorokova Facanha A.L."/>
            <person name="Appelgren H."/>
            <person name="Tabish M."/>
            <person name="Okorokov L."/>
            <person name="Ekwall K."/>
        </authorList>
    </citation>
    <scope>FUNCTION</scope>
    <scope>SUBCELLULAR LOCATION</scope>
</reference>
<reference key="4">
    <citation type="journal article" date="2005" name="Genes Genet. Syst.">
        <title>The cation-transporting P-type ATPase Cta4 is required for assembly of the forespore membrane in fission yeast.</title>
        <authorList>
            <person name="Yoshida S.H."/>
            <person name="Nakamura T."/>
            <person name="Shimoda C."/>
        </authorList>
    </citation>
    <scope>FUNCTION</scope>
    <scope>SUBCELLULAR LOCATION</scope>
    <scope>DEVELOPMENTAL STAGE</scope>
    <scope>DISRUPTION PHENOTYPE</scope>
    <scope>MUTAGENESIS OF GLY-615</scope>
</reference>
<reference key="5">
    <citation type="journal article" date="2011" name="PLoS ONE">
        <title>P(5A)-type ATPase Cta4p is essential for Ca2+ transport in the endoplasmic reticulum of Schizosaccharomyces pombe.</title>
        <authorList>
            <person name="Lustoza A.C."/>
            <person name="Palma L.M."/>
            <person name="Facanha A.R."/>
            <person name="Okorokov L.A."/>
            <person name="Okorokova-Facanha A.L."/>
        </authorList>
    </citation>
    <scope>FUNCTION</scope>
    <scope>SUBCELLULAR LOCATION</scope>
    <scope>DISRUPTION PHENOTYPE</scope>
    <source>
        <strain evidence="10">Fy1180</strain>
    </source>
</reference>
<evidence type="ECO:0000250" key="1">
    <source>
        <dbReference type="UniProtKB" id="P39986"/>
    </source>
</evidence>
<evidence type="ECO:0000250" key="2">
    <source>
        <dbReference type="UniProtKB" id="Q9Y2Q0"/>
    </source>
</evidence>
<evidence type="ECO:0000255" key="3"/>
<evidence type="ECO:0000269" key="4">
    <source>
    </source>
</evidence>
<evidence type="ECO:0000269" key="5">
    <source>
    </source>
</evidence>
<evidence type="ECO:0000269" key="6">
    <source>
    </source>
</evidence>
<evidence type="ECO:0000269" key="7">
    <source>
    </source>
</evidence>
<evidence type="ECO:0000303" key="8">
    <source>
    </source>
</evidence>
<evidence type="ECO:0000303" key="9">
    <source>
    </source>
</evidence>
<evidence type="ECO:0000303" key="10">
    <source>
    </source>
</evidence>
<evidence type="ECO:0000305" key="11"/>
<evidence type="ECO:0000312" key="12">
    <source>
        <dbReference type="PomBase" id="SPACUNK4.07c"/>
    </source>
</evidence>
<feature type="chain" id="PRO_0000046350" description="Endoplasmic reticulum transmembrane helix translocase">
    <location>
        <begin position="1"/>
        <end position="1211"/>
    </location>
</feature>
<feature type="topological domain" description="Cytoplasmic" evidence="3">
    <location>
        <begin position="1"/>
        <end position="23"/>
    </location>
</feature>
<feature type="transmembrane region" description="Helical" evidence="3">
    <location>
        <begin position="24"/>
        <end position="44"/>
    </location>
</feature>
<feature type="topological domain" description="Lumenal" evidence="3">
    <location>
        <begin position="45"/>
        <end position="54"/>
    </location>
</feature>
<feature type="transmembrane region" description="Helical" evidence="3">
    <location>
        <begin position="55"/>
        <end position="75"/>
    </location>
</feature>
<feature type="topological domain" description="Cytoplasmic" evidence="3">
    <location>
        <begin position="76"/>
        <end position="191"/>
    </location>
</feature>
<feature type="transmembrane region" description="Helical" evidence="3">
    <location>
        <begin position="192"/>
        <end position="212"/>
    </location>
</feature>
<feature type="topological domain" description="Lumenal" evidence="3">
    <location>
        <begin position="213"/>
        <end position="216"/>
    </location>
</feature>
<feature type="transmembrane region" description="Helical" evidence="3">
    <location>
        <begin position="217"/>
        <end position="237"/>
    </location>
</feature>
<feature type="topological domain" description="Cytoplasmic" evidence="3">
    <location>
        <begin position="238"/>
        <end position="397"/>
    </location>
</feature>
<feature type="transmembrane region" description="Helical" evidence="3">
    <location>
        <begin position="398"/>
        <end position="418"/>
    </location>
</feature>
<feature type="topological domain" description="Lumenal" evidence="3">
    <location>
        <begin position="419"/>
        <end position="1057"/>
    </location>
</feature>
<feature type="transmembrane region" description="Helical" evidence="3">
    <location>
        <begin position="1058"/>
        <end position="1078"/>
    </location>
</feature>
<feature type="topological domain" description="Cytoplasmic" evidence="3">
    <location>
        <begin position="1079"/>
        <end position="1100"/>
    </location>
</feature>
<feature type="transmembrane region" description="Helical" evidence="3">
    <location>
        <begin position="1101"/>
        <end position="1121"/>
    </location>
</feature>
<feature type="topological domain" description="Lumenal" evidence="3">
    <location>
        <begin position="1122"/>
        <end position="1136"/>
    </location>
</feature>
<feature type="transmembrane region" description="Helical" evidence="3">
    <location>
        <begin position="1137"/>
        <end position="1157"/>
    </location>
</feature>
<feature type="topological domain" description="Cytoplasmic" evidence="3">
    <location>
        <begin position="1158"/>
        <end position="1174"/>
    </location>
</feature>
<feature type="transmembrane region" description="Helical" evidence="3">
    <location>
        <begin position="1175"/>
        <end position="1195"/>
    </location>
</feature>
<feature type="topological domain" description="Lumenal" evidence="3">
    <location>
        <begin position="1196"/>
        <end position="1211"/>
    </location>
</feature>
<feature type="region of interest" description="A-domain; part 1" evidence="1">
    <location>
        <begin position="155"/>
        <end position="185"/>
    </location>
</feature>
<feature type="region of interest" description="A-domain; part 2" evidence="1">
    <location>
        <begin position="250"/>
        <end position="388"/>
    </location>
</feature>
<feature type="region of interest" description="P-domain; part 1" evidence="1">
    <location>
        <begin position="464"/>
        <end position="493"/>
    </location>
</feature>
<feature type="region of interest" description="N-domain" evidence="1">
    <location>
        <begin position="495"/>
        <end position="685"/>
    </location>
</feature>
<feature type="region of interest" description="P-domain; part 2" evidence="1">
    <location>
        <begin position="688"/>
        <end position="845"/>
    </location>
</feature>
<feature type="region of interest" description="Arm-like" evidence="1">
    <location>
        <begin position="846"/>
        <end position="955"/>
    </location>
</feature>
<feature type="region of interest" description="P-domain; part 3" evidence="1">
    <location>
        <begin position="956"/>
        <end position="971"/>
    </location>
</feature>
<feature type="active site" description="4-aspartylphosphate intermediate" evidence="1">
    <location>
        <position position="485"/>
    </location>
</feature>
<feature type="binding site" evidence="1">
    <location>
        <begin position="485"/>
        <end position="487"/>
    </location>
    <ligand>
        <name>ATP</name>
        <dbReference type="ChEBI" id="CHEBI:30616"/>
    </ligand>
</feature>
<feature type="binding site" evidence="1">
    <location>
        <position position="485"/>
    </location>
    <ligand>
        <name>Mg(2+)</name>
        <dbReference type="ChEBI" id="CHEBI:18420"/>
    </ligand>
</feature>
<feature type="binding site" evidence="1">
    <location>
        <position position="487"/>
    </location>
    <ligand>
        <name>Mg(2+)</name>
        <dbReference type="ChEBI" id="CHEBI:18420"/>
    </ligand>
</feature>
<feature type="binding site" evidence="2">
    <location>
        <position position="587"/>
    </location>
    <ligand>
        <name>ATP</name>
        <dbReference type="ChEBI" id="CHEBI:30616"/>
    </ligand>
</feature>
<feature type="binding site" evidence="1">
    <location>
        <position position="644"/>
    </location>
    <ligand>
        <name>ATP</name>
        <dbReference type="ChEBI" id="CHEBI:30616"/>
    </ligand>
</feature>
<feature type="binding site" evidence="1">
    <location>
        <position position="710"/>
    </location>
    <ligand>
        <name>ATP</name>
        <dbReference type="ChEBI" id="CHEBI:30616"/>
    </ligand>
</feature>
<feature type="binding site" evidence="1">
    <location>
        <begin position="824"/>
        <end position="828"/>
    </location>
    <ligand>
        <name>ATP</name>
        <dbReference type="ChEBI" id="CHEBI:30616"/>
    </ligand>
</feature>
<feature type="binding site" evidence="1">
    <location>
        <position position="824"/>
    </location>
    <ligand>
        <name>Mg(2+)</name>
        <dbReference type="ChEBI" id="CHEBI:18420"/>
    </ligand>
</feature>
<feature type="mutagenesis site" description="In sev4-L5; growth defects at high and low temperatures, and sensitivity to high and extremely low concentrations of calcium ions. Conjugates to form zygotes at a lower efficiency than wild-type. Meiotic nuclear divisions proceed normally, but is not forming spores. Incomplete structure alteration of the spindle pole body, and hence forespore membrane formation is severely impaired." evidence="6">
    <original>G</original>
    <variation>E</variation>
    <location>
        <position position="615"/>
    </location>
</feature>
<keyword id="KW-0067">ATP-binding</keyword>
<keyword id="KW-0131">Cell cycle</keyword>
<keyword id="KW-0132">Cell division</keyword>
<keyword id="KW-0256">Endoplasmic reticulum</keyword>
<keyword id="KW-0460">Magnesium</keyword>
<keyword id="KW-0472">Membrane</keyword>
<keyword id="KW-0479">Metal-binding</keyword>
<keyword id="KW-0547">Nucleotide-binding</keyword>
<keyword id="KW-0653">Protein transport</keyword>
<keyword id="KW-1185">Reference proteome</keyword>
<keyword id="KW-0749">Sporulation</keyword>
<keyword id="KW-1278">Translocase</keyword>
<keyword id="KW-0812">Transmembrane</keyword>
<keyword id="KW-1133">Transmembrane helix</keyword>
<keyword id="KW-0813">Transport</keyword>